<evidence type="ECO:0000255" key="1">
    <source>
        <dbReference type="HAMAP-Rule" id="MF_01270"/>
    </source>
</evidence>
<proteinExistence type="inferred from homology"/>
<keyword id="KW-0067">ATP-binding</keyword>
<keyword id="KW-0119">Carbohydrate metabolism</keyword>
<keyword id="KW-0418">Kinase</keyword>
<keyword id="KW-0547">Nucleotide-binding</keyword>
<keyword id="KW-1185">Reference proteome</keyword>
<keyword id="KW-0808">Transferase</keyword>
<dbReference type="EC" id="2.7.1.170" evidence="1"/>
<dbReference type="EMBL" id="CP000821">
    <property type="protein sequence ID" value="ABV35713.1"/>
    <property type="molecule type" value="Genomic_DNA"/>
</dbReference>
<dbReference type="RefSeq" id="WP_012141449.1">
    <property type="nucleotide sequence ID" value="NC_009831.1"/>
</dbReference>
<dbReference type="SMR" id="A8FS90"/>
<dbReference type="STRING" id="425104.Ssed_1102"/>
<dbReference type="KEGG" id="sse:Ssed_1102"/>
<dbReference type="eggNOG" id="COG2377">
    <property type="taxonomic scope" value="Bacteria"/>
</dbReference>
<dbReference type="HOGENOM" id="CLU_038782_0_0_6"/>
<dbReference type="OrthoDB" id="9763949at2"/>
<dbReference type="UniPathway" id="UPA00343"/>
<dbReference type="UniPathway" id="UPA00544"/>
<dbReference type="Proteomes" id="UP000002015">
    <property type="component" value="Chromosome"/>
</dbReference>
<dbReference type="GO" id="GO:0005524">
    <property type="term" value="F:ATP binding"/>
    <property type="evidence" value="ECO:0007669"/>
    <property type="project" value="UniProtKB-UniRule"/>
</dbReference>
<dbReference type="GO" id="GO:0016301">
    <property type="term" value="F:kinase activity"/>
    <property type="evidence" value="ECO:0007669"/>
    <property type="project" value="UniProtKB-KW"/>
</dbReference>
<dbReference type="GO" id="GO:0016773">
    <property type="term" value="F:phosphotransferase activity, alcohol group as acceptor"/>
    <property type="evidence" value="ECO:0007669"/>
    <property type="project" value="UniProtKB-UniRule"/>
</dbReference>
<dbReference type="GO" id="GO:0097175">
    <property type="term" value="P:1,6-anhydro-N-acetyl-beta-muramic acid catabolic process"/>
    <property type="evidence" value="ECO:0007669"/>
    <property type="project" value="UniProtKB-UniRule"/>
</dbReference>
<dbReference type="GO" id="GO:0006040">
    <property type="term" value="P:amino sugar metabolic process"/>
    <property type="evidence" value="ECO:0007669"/>
    <property type="project" value="InterPro"/>
</dbReference>
<dbReference type="GO" id="GO:0009254">
    <property type="term" value="P:peptidoglycan turnover"/>
    <property type="evidence" value="ECO:0007669"/>
    <property type="project" value="UniProtKB-UniRule"/>
</dbReference>
<dbReference type="CDD" id="cd24050">
    <property type="entry name" value="ASKHA_NBD_ANMK"/>
    <property type="match status" value="1"/>
</dbReference>
<dbReference type="Gene3D" id="3.30.420.40">
    <property type="match status" value="2"/>
</dbReference>
<dbReference type="HAMAP" id="MF_01270">
    <property type="entry name" value="AnhMurNAc_kinase"/>
    <property type="match status" value="1"/>
</dbReference>
<dbReference type="InterPro" id="IPR005338">
    <property type="entry name" value="Anhydro_N_Ac-Mur_kinase"/>
</dbReference>
<dbReference type="InterPro" id="IPR043129">
    <property type="entry name" value="ATPase_NBD"/>
</dbReference>
<dbReference type="NCBIfam" id="NF007139">
    <property type="entry name" value="PRK09585.1-3"/>
    <property type="match status" value="1"/>
</dbReference>
<dbReference type="NCBIfam" id="NF007148">
    <property type="entry name" value="PRK09585.3-2"/>
    <property type="match status" value="1"/>
</dbReference>
<dbReference type="PANTHER" id="PTHR30605">
    <property type="entry name" value="ANHYDRO-N-ACETYLMURAMIC ACID KINASE"/>
    <property type="match status" value="1"/>
</dbReference>
<dbReference type="PANTHER" id="PTHR30605:SF0">
    <property type="entry name" value="ANHYDRO-N-ACETYLMURAMIC ACID KINASE"/>
    <property type="match status" value="1"/>
</dbReference>
<dbReference type="Pfam" id="PF03702">
    <property type="entry name" value="AnmK"/>
    <property type="match status" value="1"/>
</dbReference>
<dbReference type="SUPFAM" id="SSF53067">
    <property type="entry name" value="Actin-like ATPase domain"/>
    <property type="match status" value="1"/>
</dbReference>
<reference key="1">
    <citation type="submission" date="2007-08" db="EMBL/GenBank/DDBJ databases">
        <title>Complete sequence of Shewanella sediminis HAW-EB3.</title>
        <authorList>
            <consortium name="US DOE Joint Genome Institute"/>
            <person name="Copeland A."/>
            <person name="Lucas S."/>
            <person name="Lapidus A."/>
            <person name="Barry K."/>
            <person name="Glavina del Rio T."/>
            <person name="Dalin E."/>
            <person name="Tice H."/>
            <person name="Pitluck S."/>
            <person name="Chertkov O."/>
            <person name="Brettin T."/>
            <person name="Bruce D."/>
            <person name="Detter J.C."/>
            <person name="Han C."/>
            <person name="Schmutz J."/>
            <person name="Larimer F."/>
            <person name="Land M."/>
            <person name="Hauser L."/>
            <person name="Kyrpides N."/>
            <person name="Kim E."/>
            <person name="Zhao J.-S."/>
            <person name="Richardson P."/>
        </authorList>
    </citation>
    <scope>NUCLEOTIDE SEQUENCE [LARGE SCALE GENOMIC DNA]</scope>
    <source>
        <strain>HAW-EB3</strain>
    </source>
</reference>
<accession>A8FS90</accession>
<feature type="chain" id="PRO_1000085840" description="Anhydro-N-acetylmuramic acid kinase">
    <location>
        <begin position="1"/>
        <end position="369"/>
    </location>
</feature>
<feature type="binding site" evidence="1">
    <location>
        <begin position="12"/>
        <end position="19"/>
    </location>
    <ligand>
        <name>ATP</name>
        <dbReference type="ChEBI" id="CHEBI:30616"/>
    </ligand>
</feature>
<sequence>MNTNYFIGLMSGTSMDGIDAVLVDFSSPSPKLVAKHSQVIPKHTLRNLQRLCLPGSDEINLLGQLDRSVGLLFGAAVNELLAKAGISKEQVVAIGSHGQTVRHMPNLDMGFTLQIGDPNTIAIETGINVIADFRRKDIALGGQGAPLVPAFHQQMFASPDTPRIILNIGGIANLTYLPGTNDDVIGFDTGPGNTLIDAWIQQVKDQAYDEDGAWAASGTTDEKLLKHLLSHTYFSQPFPKSTGRELFNQAWLEQQAAEFGYLNEADIQSTLLDVTCHSIAKDTLALSLRGELFVCGGGAFNTELMSRLDKLLPGYKLSTTSDLGIAPQWVEGIAFAWLAMRHHQGLSGNLPAVTGASREAVLGSLFPAD</sequence>
<name>ANMK_SHESH</name>
<organism>
    <name type="scientific">Shewanella sediminis (strain HAW-EB3)</name>
    <dbReference type="NCBI Taxonomy" id="425104"/>
    <lineage>
        <taxon>Bacteria</taxon>
        <taxon>Pseudomonadati</taxon>
        <taxon>Pseudomonadota</taxon>
        <taxon>Gammaproteobacteria</taxon>
        <taxon>Alteromonadales</taxon>
        <taxon>Shewanellaceae</taxon>
        <taxon>Shewanella</taxon>
    </lineage>
</organism>
<comment type="function">
    <text evidence="1">Catalyzes the specific phosphorylation of 1,6-anhydro-N-acetylmuramic acid (anhMurNAc) with the simultaneous cleavage of the 1,6-anhydro ring, generating MurNAc-6-P. Is required for the utilization of anhMurNAc either imported from the medium or derived from its own cell wall murein, and thus plays a role in cell wall recycling.</text>
</comment>
<comment type="catalytic activity">
    <reaction evidence="1">
        <text>1,6-anhydro-N-acetyl-beta-muramate + ATP + H2O = N-acetyl-D-muramate 6-phosphate + ADP + H(+)</text>
        <dbReference type="Rhea" id="RHEA:24952"/>
        <dbReference type="ChEBI" id="CHEBI:15377"/>
        <dbReference type="ChEBI" id="CHEBI:15378"/>
        <dbReference type="ChEBI" id="CHEBI:30616"/>
        <dbReference type="ChEBI" id="CHEBI:58690"/>
        <dbReference type="ChEBI" id="CHEBI:58722"/>
        <dbReference type="ChEBI" id="CHEBI:456216"/>
        <dbReference type="EC" id="2.7.1.170"/>
    </reaction>
</comment>
<comment type="pathway">
    <text evidence="1">Amino-sugar metabolism; 1,6-anhydro-N-acetylmuramate degradation.</text>
</comment>
<comment type="pathway">
    <text evidence="1">Cell wall biogenesis; peptidoglycan recycling.</text>
</comment>
<comment type="similarity">
    <text evidence="1">Belongs to the anhydro-N-acetylmuramic acid kinase family.</text>
</comment>
<protein>
    <recommendedName>
        <fullName evidence="1">Anhydro-N-acetylmuramic acid kinase</fullName>
        <ecNumber evidence="1">2.7.1.170</ecNumber>
    </recommendedName>
    <alternativeName>
        <fullName evidence="1">AnhMurNAc kinase</fullName>
    </alternativeName>
</protein>
<gene>
    <name evidence="1" type="primary">anmK</name>
    <name type="ordered locus">Ssed_1102</name>
</gene>